<accession>Q14CX7</accession>
<accession>A0JLU7</accession>
<accession>Q6MZH1</accession>
<accession>Q7Z4N6</accession>
<accession>Q9H911</accession>
<feature type="chain" id="PRO_0000294337" description="N-alpha-acetyltransferase 25, NatB auxiliary subunit">
    <location>
        <begin position="1"/>
        <end position="972"/>
    </location>
</feature>
<feature type="repeat" description="TPR 1">
    <location>
        <begin position="11"/>
        <end position="44"/>
    </location>
</feature>
<feature type="repeat" description="TPR 2">
    <location>
        <begin position="45"/>
        <end position="78"/>
    </location>
</feature>
<feature type="repeat" description="TPR 3">
    <location>
        <begin position="79"/>
        <end position="112"/>
    </location>
</feature>
<feature type="repeat" description="TPR 4">
    <location>
        <begin position="114"/>
        <end position="146"/>
    </location>
</feature>
<feature type="splice variant" id="VSP_026629" description="In isoform 2." evidence="4">
    <original>TISVILWVSSYCE</original>
    <variation>VSFCSLPKRHCCS</variation>
    <location>
        <begin position="847"/>
        <end position="859"/>
    </location>
</feature>
<feature type="splice variant" id="VSP_026630" description="In isoform 2." evidence="4">
    <location>
        <begin position="860"/>
        <end position="972"/>
    </location>
</feature>
<feature type="sequence variant" id="VAR_054099" description="In dbSNP:rs16941860.">
    <original>L</original>
    <variation>F</variation>
    <location>
        <position position="426"/>
    </location>
</feature>
<feature type="sequence variant" id="VAR_035872" description="In a breast cancer sample; somatic mutation." evidence="1">
    <original>S</original>
    <variation>R</variation>
    <location>
        <position position="789"/>
    </location>
</feature>
<feature type="sequence variant" id="VAR_033156" description="In dbSNP:rs12231744.">
    <original>K</original>
    <variation>R</variation>
    <location>
        <position position="876"/>
    </location>
</feature>
<feature type="sequence variant" id="VAR_054100" description="In dbSNP:rs12298022.">
    <original>L</original>
    <variation>I</variation>
    <location>
        <position position="915"/>
    </location>
</feature>
<feature type="sequence conflict" description="In Ref. 4; BAB14432." evidence="5" ref="4">
    <original>I</original>
    <variation>T</variation>
    <location>
        <position position="202"/>
    </location>
</feature>
<feature type="sequence conflict" description="In Ref. 4; BAB14432." evidence="5" ref="4">
    <original>Y</original>
    <variation>S</variation>
    <location>
        <position position="466"/>
    </location>
</feature>
<feature type="sequence conflict" description="In Ref. 4; BAB14432." evidence="5" ref="4">
    <original>S</original>
    <variation>T</variation>
    <location>
        <position position="672"/>
    </location>
</feature>
<feature type="sequence conflict" description="In Ref. 2; CAE46062." evidence="5" ref="2">
    <original>S</original>
    <variation>G</variation>
    <location>
        <position position="817"/>
    </location>
</feature>
<feature type="helix" evidence="7">
    <location>
        <begin position="10"/>
        <end position="23"/>
    </location>
</feature>
<feature type="helix" evidence="7">
    <location>
        <begin position="27"/>
        <end position="40"/>
    </location>
</feature>
<feature type="helix" evidence="6">
    <location>
        <begin position="48"/>
        <end position="53"/>
    </location>
</feature>
<feature type="helix" evidence="6">
    <location>
        <begin position="62"/>
        <end position="71"/>
    </location>
</feature>
<feature type="helix" evidence="6">
    <location>
        <begin position="79"/>
        <end position="91"/>
    </location>
</feature>
<feature type="helix" evidence="6">
    <location>
        <begin position="96"/>
        <end position="102"/>
    </location>
</feature>
<feature type="turn" evidence="6">
    <location>
        <begin position="103"/>
        <end position="106"/>
    </location>
</feature>
<feature type="helix" evidence="6">
    <location>
        <begin position="114"/>
        <end position="126"/>
    </location>
</feature>
<feature type="helix" evidence="6">
    <location>
        <begin position="129"/>
        <end position="142"/>
    </location>
</feature>
<feature type="helix" evidence="6">
    <location>
        <begin position="148"/>
        <end position="161"/>
    </location>
</feature>
<feature type="strand" evidence="6">
    <location>
        <begin position="165"/>
        <end position="167"/>
    </location>
</feature>
<feature type="turn" evidence="6">
    <location>
        <begin position="168"/>
        <end position="173"/>
    </location>
</feature>
<feature type="helix" evidence="6">
    <location>
        <begin position="174"/>
        <end position="186"/>
    </location>
</feature>
<feature type="turn" evidence="6">
    <location>
        <begin position="187"/>
        <end position="190"/>
    </location>
</feature>
<feature type="helix" evidence="6">
    <location>
        <begin position="194"/>
        <end position="205"/>
    </location>
</feature>
<feature type="helix" evidence="6">
    <location>
        <begin position="209"/>
        <end position="217"/>
    </location>
</feature>
<feature type="helix" evidence="6">
    <location>
        <begin position="220"/>
        <end position="223"/>
    </location>
</feature>
<feature type="strand" evidence="6">
    <location>
        <begin position="226"/>
        <end position="229"/>
    </location>
</feature>
<feature type="turn" evidence="6">
    <location>
        <begin position="230"/>
        <end position="233"/>
    </location>
</feature>
<feature type="helix" evidence="6">
    <location>
        <begin position="234"/>
        <end position="241"/>
    </location>
</feature>
<feature type="helix" evidence="6">
    <location>
        <begin position="246"/>
        <end position="259"/>
    </location>
</feature>
<feature type="helix" evidence="6">
    <location>
        <begin position="263"/>
        <end position="278"/>
    </location>
</feature>
<feature type="strand" evidence="6">
    <location>
        <begin position="285"/>
        <end position="293"/>
    </location>
</feature>
<feature type="helix" evidence="6">
    <location>
        <begin position="300"/>
        <end position="314"/>
    </location>
</feature>
<feature type="strand" evidence="6">
    <location>
        <begin position="316"/>
        <end position="318"/>
    </location>
</feature>
<feature type="helix" evidence="6">
    <location>
        <begin position="322"/>
        <end position="335"/>
    </location>
</feature>
<feature type="helix" evidence="6">
    <location>
        <begin position="348"/>
        <end position="358"/>
    </location>
</feature>
<feature type="strand" evidence="7">
    <location>
        <begin position="360"/>
        <end position="362"/>
    </location>
</feature>
<feature type="helix" evidence="6">
    <location>
        <begin position="366"/>
        <end position="369"/>
    </location>
</feature>
<feature type="helix" evidence="6">
    <location>
        <begin position="373"/>
        <end position="375"/>
    </location>
</feature>
<feature type="turn" evidence="6">
    <location>
        <begin position="380"/>
        <end position="383"/>
    </location>
</feature>
<feature type="helix" evidence="6">
    <location>
        <begin position="384"/>
        <end position="388"/>
    </location>
</feature>
<feature type="turn" evidence="7">
    <location>
        <begin position="389"/>
        <end position="391"/>
    </location>
</feature>
<feature type="turn" evidence="6">
    <location>
        <begin position="398"/>
        <end position="400"/>
    </location>
</feature>
<feature type="helix" evidence="6">
    <location>
        <begin position="409"/>
        <end position="423"/>
    </location>
</feature>
<feature type="strand" evidence="6">
    <location>
        <begin position="427"/>
        <end position="430"/>
    </location>
</feature>
<feature type="helix" evidence="6">
    <location>
        <begin position="434"/>
        <end position="448"/>
    </location>
</feature>
<feature type="turn" evidence="6">
    <location>
        <begin position="452"/>
        <end position="455"/>
    </location>
</feature>
<feature type="strand" evidence="6">
    <location>
        <begin position="458"/>
        <end position="460"/>
    </location>
</feature>
<feature type="turn" evidence="6">
    <location>
        <begin position="463"/>
        <end position="465"/>
    </location>
</feature>
<feature type="helix" evidence="6">
    <location>
        <begin position="466"/>
        <end position="469"/>
    </location>
</feature>
<feature type="turn" evidence="6">
    <location>
        <begin position="470"/>
        <end position="475"/>
    </location>
</feature>
<feature type="helix" evidence="6">
    <location>
        <begin position="476"/>
        <end position="482"/>
    </location>
</feature>
<feature type="strand" evidence="6">
    <location>
        <begin position="485"/>
        <end position="487"/>
    </location>
</feature>
<feature type="helix" evidence="6">
    <location>
        <begin position="488"/>
        <end position="501"/>
    </location>
</feature>
<feature type="helix" evidence="6">
    <location>
        <begin position="506"/>
        <end position="519"/>
    </location>
</feature>
<feature type="helix" evidence="6">
    <location>
        <begin position="523"/>
        <end position="529"/>
    </location>
</feature>
<feature type="turn" evidence="6">
    <location>
        <begin position="530"/>
        <end position="533"/>
    </location>
</feature>
<feature type="turn" evidence="6">
    <location>
        <begin position="536"/>
        <end position="543"/>
    </location>
</feature>
<feature type="helix" evidence="6">
    <location>
        <begin position="544"/>
        <end position="550"/>
    </location>
</feature>
<feature type="turn" evidence="6">
    <location>
        <begin position="551"/>
        <end position="554"/>
    </location>
</feature>
<feature type="helix" evidence="6">
    <location>
        <begin position="556"/>
        <end position="582"/>
    </location>
</feature>
<feature type="turn" evidence="6">
    <location>
        <begin position="583"/>
        <end position="588"/>
    </location>
</feature>
<feature type="strand" evidence="6">
    <location>
        <begin position="590"/>
        <end position="592"/>
    </location>
</feature>
<feature type="helix" evidence="6">
    <location>
        <begin position="593"/>
        <end position="604"/>
    </location>
</feature>
<feature type="helix" evidence="6">
    <location>
        <begin position="607"/>
        <end position="623"/>
    </location>
</feature>
<feature type="strand" evidence="6">
    <location>
        <begin position="624"/>
        <end position="629"/>
    </location>
</feature>
<feature type="helix" evidence="6">
    <location>
        <begin position="631"/>
        <end position="635"/>
    </location>
</feature>
<feature type="turn" evidence="6">
    <location>
        <begin position="636"/>
        <end position="638"/>
    </location>
</feature>
<feature type="strand" evidence="6">
    <location>
        <begin position="649"/>
        <end position="651"/>
    </location>
</feature>
<feature type="strand" evidence="6">
    <location>
        <begin position="667"/>
        <end position="670"/>
    </location>
</feature>
<feature type="helix" evidence="6">
    <location>
        <begin position="673"/>
        <end position="697"/>
    </location>
</feature>
<feature type="helix" evidence="7">
    <location>
        <begin position="701"/>
        <end position="703"/>
    </location>
</feature>
<feature type="helix" evidence="6">
    <location>
        <begin position="724"/>
        <end position="727"/>
    </location>
</feature>
<feature type="helix" evidence="6">
    <location>
        <begin position="729"/>
        <end position="745"/>
    </location>
</feature>
<feature type="helix" evidence="6">
    <location>
        <begin position="761"/>
        <end position="766"/>
    </location>
</feature>
<feature type="helix" evidence="6">
    <location>
        <begin position="770"/>
        <end position="789"/>
    </location>
</feature>
<feature type="strand" evidence="6">
    <location>
        <begin position="791"/>
        <end position="793"/>
    </location>
</feature>
<feature type="helix" evidence="6">
    <location>
        <begin position="795"/>
        <end position="819"/>
    </location>
</feature>
<feature type="helix" evidence="6">
    <location>
        <begin position="827"/>
        <end position="829"/>
    </location>
</feature>
<feature type="strand" evidence="7">
    <location>
        <begin position="830"/>
        <end position="832"/>
    </location>
</feature>
<feature type="helix" evidence="6">
    <location>
        <begin position="836"/>
        <end position="867"/>
    </location>
</feature>
<feature type="helix" evidence="6">
    <location>
        <begin position="884"/>
        <end position="904"/>
    </location>
</feature>
<feature type="helix" evidence="6">
    <location>
        <begin position="908"/>
        <end position="911"/>
    </location>
</feature>
<feature type="helix" evidence="6">
    <location>
        <begin position="934"/>
        <end position="963"/>
    </location>
</feature>
<feature type="helix" evidence="6">
    <location>
        <begin position="964"/>
        <end position="968"/>
    </location>
</feature>
<evidence type="ECO:0000269" key="1">
    <source>
    </source>
</evidence>
<evidence type="ECO:0000269" key="2">
    <source>
    </source>
</evidence>
<evidence type="ECO:0000269" key="3">
    <source>
    </source>
</evidence>
<evidence type="ECO:0000303" key="4">
    <source>
    </source>
</evidence>
<evidence type="ECO:0000305" key="5"/>
<evidence type="ECO:0007829" key="6">
    <source>
        <dbReference type="PDB" id="7STX"/>
    </source>
</evidence>
<evidence type="ECO:0007829" key="7">
    <source>
        <dbReference type="PDB" id="8G0L"/>
    </source>
</evidence>
<dbReference type="EMBL" id="AB054990">
    <property type="protein sequence ID" value="BAC80174.1"/>
    <property type="molecule type" value="mRNA"/>
</dbReference>
<dbReference type="EMBL" id="BX641140">
    <property type="protein sequence ID" value="CAE46062.1"/>
    <property type="status" value="ALT_INIT"/>
    <property type="molecule type" value="mRNA"/>
</dbReference>
<dbReference type="EMBL" id="BC034357">
    <property type="protein sequence ID" value="AAH34357.1"/>
    <property type="molecule type" value="mRNA"/>
</dbReference>
<dbReference type="EMBL" id="BC113585">
    <property type="protein sequence ID" value="AAI13586.1"/>
    <property type="molecule type" value="mRNA"/>
</dbReference>
<dbReference type="EMBL" id="BC113587">
    <property type="protein sequence ID" value="AAI13588.1"/>
    <property type="molecule type" value="mRNA"/>
</dbReference>
<dbReference type="EMBL" id="AK023151">
    <property type="protein sequence ID" value="BAB14432.1"/>
    <property type="status" value="ALT_INIT"/>
    <property type="molecule type" value="mRNA"/>
</dbReference>
<dbReference type="CCDS" id="CCDS9159.1">
    <molecule id="Q14CX7-1"/>
</dbReference>
<dbReference type="RefSeq" id="NP_079229.2">
    <molecule id="Q14CX7-1"/>
    <property type="nucleotide sequence ID" value="NM_024953.3"/>
</dbReference>
<dbReference type="PDB" id="6VP9">
    <property type="method" value="EM"/>
    <property type="resolution" value="3.46 A"/>
    <property type="chains" value="B=1-972"/>
</dbReference>
<dbReference type="PDB" id="7STX">
    <property type="method" value="EM"/>
    <property type="resolution" value="3.14 A"/>
    <property type="chains" value="B=45-972"/>
</dbReference>
<dbReference type="PDB" id="8G0L">
    <property type="method" value="EM"/>
    <property type="resolution" value="3.39 A"/>
    <property type="chains" value="B=1-972"/>
</dbReference>
<dbReference type="PDBsum" id="6VP9"/>
<dbReference type="PDBsum" id="7STX"/>
<dbReference type="PDBsum" id="8G0L"/>
<dbReference type="EMDB" id="EMD-21307"/>
<dbReference type="EMDB" id="EMD-25438"/>
<dbReference type="EMDB" id="EMD-29657"/>
<dbReference type="SMR" id="Q14CX7"/>
<dbReference type="BioGRID" id="123072">
    <property type="interactions" value="70"/>
</dbReference>
<dbReference type="ComplexPortal" id="CPX-6270">
    <property type="entry name" value="NatB N-alpha-acetyltransferase complex"/>
</dbReference>
<dbReference type="CORUM" id="Q14CX7"/>
<dbReference type="DIP" id="DIP-50826N"/>
<dbReference type="FunCoup" id="Q14CX7">
    <property type="interactions" value="3979"/>
</dbReference>
<dbReference type="IntAct" id="Q14CX7">
    <property type="interactions" value="31"/>
</dbReference>
<dbReference type="STRING" id="9606.ENSP00000261745"/>
<dbReference type="GlyGen" id="Q14CX7">
    <property type="glycosylation" value="3 sites, 1 N-linked glycan (1 site), 1 O-linked glycan (2 sites)"/>
</dbReference>
<dbReference type="iPTMnet" id="Q14CX7"/>
<dbReference type="MetOSite" id="Q14CX7"/>
<dbReference type="PhosphoSitePlus" id="Q14CX7"/>
<dbReference type="SwissPalm" id="Q14CX7"/>
<dbReference type="BioMuta" id="NAA25"/>
<dbReference type="DMDM" id="121948761"/>
<dbReference type="jPOST" id="Q14CX7"/>
<dbReference type="MassIVE" id="Q14CX7"/>
<dbReference type="PaxDb" id="9606-ENSP00000261745"/>
<dbReference type="PeptideAtlas" id="Q14CX7"/>
<dbReference type="ProteomicsDB" id="60335">
    <molecule id="Q14CX7-1"/>
</dbReference>
<dbReference type="ProteomicsDB" id="60336">
    <molecule id="Q14CX7-2"/>
</dbReference>
<dbReference type="Pumba" id="Q14CX7"/>
<dbReference type="Antibodypedia" id="50891">
    <property type="antibodies" value="113 antibodies from 20 providers"/>
</dbReference>
<dbReference type="DNASU" id="80018"/>
<dbReference type="Ensembl" id="ENST00000261745.9">
    <molecule id="Q14CX7-1"/>
    <property type="protein sequence ID" value="ENSP00000261745.4"/>
    <property type="gene ID" value="ENSG00000111300.10"/>
</dbReference>
<dbReference type="GeneID" id="80018"/>
<dbReference type="KEGG" id="hsa:80018"/>
<dbReference type="MANE-Select" id="ENST00000261745.9">
    <property type="protein sequence ID" value="ENSP00000261745.4"/>
    <property type="RefSeq nucleotide sequence ID" value="NM_024953.4"/>
    <property type="RefSeq protein sequence ID" value="NP_079229.2"/>
</dbReference>
<dbReference type="UCSC" id="uc001ttm.4">
    <molecule id="Q14CX7-1"/>
    <property type="organism name" value="human"/>
</dbReference>
<dbReference type="AGR" id="HGNC:25783"/>
<dbReference type="CTD" id="80018"/>
<dbReference type="DisGeNET" id="80018"/>
<dbReference type="GeneCards" id="NAA25"/>
<dbReference type="HGNC" id="HGNC:25783">
    <property type="gene designation" value="NAA25"/>
</dbReference>
<dbReference type="HPA" id="ENSG00000111300">
    <property type="expression patterns" value="Low tissue specificity"/>
</dbReference>
<dbReference type="MIM" id="612755">
    <property type="type" value="gene"/>
</dbReference>
<dbReference type="neXtProt" id="NX_Q14CX7"/>
<dbReference type="OpenTargets" id="ENSG00000111300"/>
<dbReference type="PharmGKB" id="PA165513030"/>
<dbReference type="VEuPathDB" id="HostDB:ENSG00000111300"/>
<dbReference type="eggNOG" id="KOG2053">
    <property type="taxonomic scope" value="Eukaryota"/>
</dbReference>
<dbReference type="GeneTree" id="ENSGT00950000183174"/>
<dbReference type="HOGENOM" id="CLU_008075_0_0_1"/>
<dbReference type="InParanoid" id="Q14CX7"/>
<dbReference type="OMA" id="WKRREHQ"/>
<dbReference type="OrthoDB" id="1874341at2759"/>
<dbReference type="PAN-GO" id="Q14CX7">
    <property type="GO annotations" value="4 GO annotations based on evolutionary models"/>
</dbReference>
<dbReference type="PhylomeDB" id="Q14CX7"/>
<dbReference type="TreeFam" id="TF315103"/>
<dbReference type="BioCyc" id="MetaCyc:ENSG00000111300-MONOMER"/>
<dbReference type="BRENDA" id="2.3.1.254">
    <property type="organism ID" value="2681"/>
</dbReference>
<dbReference type="PathwayCommons" id="Q14CX7"/>
<dbReference type="SignaLink" id="Q14CX7"/>
<dbReference type="SIGNOR" id="Q14CX7"/>
<dbReference type="BioGRID-ORCS" id="80018">
    <property type="hits" value="614 hits in 1171 CRISPR screens"/>
</dbReference>
<dbReference type="ChiTaRS" id="NAA25">
    <property type="organism name" value="human"/>
</dbReference>
<dbReference type="GenomeRNAi" id="80018"/>
<dbReference type="Pharos" id="Q14CX7">
    <property type="development level" value="Tbio"/>
</dbReference>
<dbReference type="PRO" id="PR:Q14CX7"/>
<dbReference type="Proteomes" id="UP000005640">
    <property type="component" value="Chromosome 12"/>
</dbReference>
<dbReference type="RNAct" id="Q14CX7">
    <property type="molecule type" value="protein"/>
</dbReference>
<dbReference type="Bgee" id="ENSG00000111300">
    <property type="expression patterns" value="Expressed in tibialis anterior and 180 other cell types or tissues"/>
</dbReference>
<dbReference type="ExpressionAtlas" id="Q14CX7">
    <property type="expression patterns" value="baseline and differential"/>
</dbReference>
<dbReference type="GO" id="GO:0005737">
    <property type="term" value="C:cytoplasm"/>
    <property type="evidence" value="ECO:0000314"/>
    <property type="project" value="ComplexPortal"/>
</dbReference>
<dbReference type="GO" id="GO:0005829">
    <property type="term" value="C:cytosol"/>
    <property type="evidence" value="ECO:0000314"/>
    <property type="project" value="HPA"/>
</dbReference>
<dbReference type="GO" id="GO:0005794">
    <property type="term" value="C:Golgi apparatus"/>
    <property type="evidence" value="ECO:0000314"/>
    <property type="project" value="HPA"/>
</dbReference>
<dbReference type="GO" id="GO:0031416">
    <property type="term" value="C:NatB complex"/>
    <property type="evidence" value="ECO:0000353"/>
    <property type="project" value="ComplexPortal"/>
</dbReference>
<dbReference type="GO" id="GO:0010698">
    <property type="term" value="F:acetyltransferase activator activity"/>
    <property type="evidence" value="ECO:0000318"/>
    <property type="project" value="GO_Central"/>
</dbReference>
<dbReference type="GO" id="GO:0007010">
    <property type="term" value="P:cytoskeleton organization"/>
    <property type="evidence" value="ECO:0000318"/>
    <property type="project" value="GO_Central"/>
</dbReference>
<dbReference type="FunFam" id="1.25.40.1040:FF:000004">
    <property type="entry name" value="N-alpha-acetyltransferase 25, NatB auxiliary subunit"/>
    <property type="match status" value="1"/>
</dbReference>
<dbReference type="Gene3D" id="1.25.40.1040">
    <property type="match status" value="1"/>
</dbReference>
<dbReference type="Gene3D" id="1.25.40.10">
    <property type="entry name" value="Tetratricopeptide repeat domain"/>
    <property type="match status" value="1"/>
</dbReference>
<dbReference type="InterPro" id="IPR019183">
    <property type="entry name" value="NAA25_NatB_aux_su"/>
</dbReference>
<dbReference type="InterPro" id="IPR011990">
    <property type="entry name" value="TPR-like_helical_dom_sf"/>
</dbReference>
<dbReference type="PANTHER" id="PTHR22767:SF3">
    <property type="entry name" value="N-ALPHA-ACETYLTRANSFERASE 25, NATB AUXILIARY SUBUNIT"/>
    <property type="match status" value="1"/>
</dbReference>
<dbReference type="PANTHER" id="PTHR22767">
    <property type="entry name" value="N-TERMINAL ACETYLTRANSFERASE-RELATED"/>
    <property type="match status" value="1"/>
</dbReference>
<dbReference type="Pfam" id="PF09797">
    <property type="entry name" value="NatB_MDM20"/>
    <property type="match status" value="1"/>
</dbReference>
<dbReference type="SUPFAM" id="SSF48452">
    <property type="entry name" value="TPR-like"/>
    <property type="match status" value="1"/>
</dbReference>
<dbReference type="PROSITE" id="PS50293">
    <property type="entry name" value="TPR_REGION"/>
    <property type="match status" value="1"/>
</dbReference>
<organism>
    <name type="scientific">Homo sapiens</name>
    <name type="common">Human</name>
    <dbReference type="NCBI Taxonomy" id="9606"/>
    <lineage>
        <taxon>Eukaryota</taxon>
        <taxon>Metazoa</taxon>
        <taxon>Chordata</taxon>
        <taxon>Craniata</taxon>
        <taxon>Vertebrata</taxon>
        <taxon>Euteleostomi</taxon>
        <taxon>Mammalia</taxon>
        <taxon>Eutheria</taxon>
        <taxon>Euarchontoglires</taxon>
        <taxon>Primates</taxon>
        <taxon>Haplorrhini</taxon>
        <taxon>Catarrhini</taxon>
        <taxon>Hominidae</taxon>
        <taxon>Homo</taxon>
    </lineage>
</organism>
<proteinExistence type="evidence at protein level"/>
<keyword id="KW-0002">3D-structure</keyword>
<keyword id="KW-0025">Alternative splicing</keyword>
<keyword id="KW-0963">Cytoplasm</keyword>
<keyword id="KW-1267">Proteomics identification</keyword>
<keyword id="KW-1185">Reference proteome</keyword>
<keyword id="KW-0677">Repeat</keyword>
<keyword id="KW-0802">TPR repeat</keyword>
<name>NAA25_HUMAN</name>
<reference key="1">
    <citation type="submission" date="2001-01" db="EMBL/GenBank/DDBJ databases">
        <title>P120 which associates with nascent polypeptide chain.</title>
        <authorList>
            <person name="Hotokezaka H."/>
            <person name="Wiedmann M."/>
        </authorList>
    </citation>
    <scope>NUCLEOTIDE SEQUENCE [MRNA] (ISOFORM 1)</scope>
</reference>
<reference key="2">
    <citation type="journal article" date="2007" name="BMC Genomics">
        <title>The full-ORF clone resource of the German cDNA consortium.</title>
        <authorList>
            <person name="Bechtel S."/>
            <person name="Rosenfelder H."/>
            <person name="Duda A."/>
            <person name="Schmidt C.P."/>
            <person name="Ernst U."/>
            <person name="Wellenreuther R."/>
            <person name="Mehrle A."/>
            <person name="Schuster C."/>
            <person name="Bahr A."/>
            <person name="Bloecker H."/>
            <person name="Heubner D."/>
            <person name="Hoerlein A."/>
            <person name="Michel G."/>
            <person name="Wedler H."/>
            <person name="Koehrer K."/>
            <person name="Ottenwaelder B."/>
            <person name="Poustka A."/>
            <person name="Wiemann S."/>
            <person name="Schupp I."/>
        </authorList>
    </citation>
    <scope>NUCLEOTIDE SEQUENCE [LARGE SCALE MRNA] (ISOFORM 2)</scope>
    <source>
        <tissue>Uterine endothelium</tissue>
    </source>
</reference>
<reference key="3">
    <citation type="journal article" date="2004" name="Genome Res.">
        <title>The status, quality, and expansion of the NIH full-length cDNA project: the Mammalian Gene Collection (MGC).</title>
        <authorList>
            <consortium name="The MGC Project Team"/>
        </authorList>
    </citation>
    <scope>NUCLEOTIDE SEQUENCE [LARGE SCALE MRNA] (ISOFORM 1)</scope>
    <source>
        <tissue>Eye</tissue>
    </source>
</reference>
<reference key="4">
    <citation type="journal article" date="2004" name="Nat. Genet.">
        <title>Complete sequencing and characterization of 21,243 full-length human cDNAs.</title>
        <authorList>
            <person name="Ota T."/>
            <person name="Suzuki Y."/>
            <person name="Nishikawa T."/>
            <person name="Otsuki T."/>
            <person name="Sugiyama T."/>
            <person name="Irie R."/>
            <person name="Wakamatsu A."/>
            <person name="Hayashi K."/>
            <person name="Sato H."/>
            <person name="Nagai K."/>
            <person name="Kimura K."/>
            <person name="Makita H."/>
            <person name="Sekine M."/>
            <person name="Obayashi M."/>
            <person name="Nishi T."/>
            <person name="Shibahara T."/>
            <person name="Tanaka T."/>
            <person name="Ishii S."/>
            <person name="Yamamoto J."/>
            <person name="Saito K."/>
            <person name="Kawai Y."/>
            <person name="Isono Y."/>
            <person name="Nakamura Y."/>
            <person name="Nagahari K."/>
            <person name="Murakami K."/>
            <person name="Yasuda T."/>
            <person name="Iwayanagi T."/>
            <person name="Wagatsuma M."/>
            <person name="Shiratori A."/>
            <person name="Sudo H."/>
            <person name="Hosoiri T."/>
            <person name="Kaku Y."/>
            <person name="Kodaira H."/>
            <person name="Kondo H."/>
            <person name="Sugawara M."/>
            <person name="Takahashi M."/>
            <person name="Kanda K."/>
            <person name="Yokoi T."/>
            <person name="Furuya T."/>
            <person name="Kikkawa E."/>
            <person name="Omura Y."/>
            <person name="Abe K."/>
            <person name="Kamihara K."/>
            <person name="Katsuta N."/>
            <person name="Sato K."/>
            <person name="Tanikawa M."/>
            <person name="Yamazaki M."/>
            <person name="Ninomiya K."/>
            <person name="Ishibashi T."/>
            <person name="Yamashita H."/>
            <person name="Murakawa K."/>
            <person name="Fujimori K."/>
            <person name="Tanai H."/>
            <person name="Kimata M."/>
            <person name="Watanabe M."/>
            <person name="Hiraoka S."/>
            <person name="Chiba Y."/>
            <person name="Ishida S."/>
            <person name="Ono Y."/>
            <person name="Takiguchi S."/>
            <person name="Watanabe S."/>
            <person name="Yosida M."/>
            <person name="Hotuta T."/>
            <person name="Kusano J."/>
            <person name="Kanehori K."/>
            <person name="Takahashi-Fujii A."/>
            <person name="Hara H."/>
            <person name="Tanase T.-O."/>
            <person name="Nomura Y."/>
            <person name="Togiya S."/>
            <person name="Komai F."/>
            <person name="Hara R."/>
            <person name="Takeuchi K."/>
            <person name="Arita M."/>
            <person name="Imose N."/>
            <person name="Musashino K."/>
            <person name="Yuuki H."/>
            <person name="Oshima A."/>
            <person name="Sasaki N."/>
            <person name="Aotsuka S."/>
            <person name="Yoshikawa Y."/>
            <person name="Matsunawa H."/>
            <person name="Ichihara T."/>
            <person name="Shiohata N."/>
            <person name="Sano S."/>
            <person name="Moriya S."/>
            <person name="Momiyama H."/>
            <person name="Satoh N."/>
            <person name="Takami S."/>
            <person name="Terashima Y."/>
            <person name="Suzuki O."/>
            <person name="Nakagawa S."/>
            <person name="Senoh A."/>
            <person name="Mizoguchi H."/>
            <person name="Goto Y."/>
            <person name="Shimizu F."/>
            <person name="Wakebe H."/>
            <person name="Hishigaki H."/>
            <person name="Watanabe T."/>
            <person name="Sugiyama A."/>
            <person name="Takemoto M."/>
            <person name="Kawakami B."/>
            <person name="Yamazaki M."/>
            <person name="Watanabe K."/>
            <person name="Kumagai A."/>
            <person name="Itakura S."/>
            <person name="Fukuzumi Y."/>
            <person name="Fujimori Y."/>
            <person name="Komiyama M."/>
            <person name="Tashiro H."/>
            <person name="Tanigami A."/>
            <person name="Fujiwara T."/>
            <person name="Ono T."/>
            <person name="Yamada K."/>
            <person name="Fujii Y."/>
            <person name="Ozaki K."/>
            <person name="Hirao M."/>
            <person name="Ohmori Y."/>
            <person name="Kawabata A."/>
            <person name="Hikiji T."/>
            <person name="Kobatake N."/>
            <person name="Inagaki H."/>
            <person name="Ikema Y."/>
            <person name="Okamoto S."/>
            <person name="Okitani R."/>
            <person name="Kawakami T."/>
            <person name="Noguchi S."/>
            <person name="Itoh T."/>
            <person name="Shigeta K."/>
            <person name="Senba T."/>
            <person name="Matsumura K."/>
            <person name="Nakajima Y."/>
            <person name="Mizuno T."/>
            <person name="Morinaga M."/>
            <person name="Sasaki M."/>
            <person name="Togashi T."/>
            <person name="Oyama M."/>
            <person name="Hata H."/>
            <person name="Watanabe M."/>
            <person name="Komatsu T."/>
            <person name="Mizushima-Sugano J."/>
            <person name="Satoh T."/>
            <person name="Shirai Y."/>
            <person name="Takahashi Y."/>
            <person name="Nakagawa K."/>
            <person name="Okumura K."/>
            <person name="Nagase T."/>
            <person name="Nomura N."/>
            <person name="Kikuchi H."/>
            <person name="Masuho Y."/>
            <person name="Yamashita R."/>
            <person name="Nakai K."/>
            <person name="Yada T."/>
            <person name="Nakamura Y."/>
            <person name="Ohara O."/>
            <person name="Isogai T."/>
            <person name="Sugano S."/>
        </authorList>
    </citation>
    <scope>NUCLEOTIDE SEQUENCE [LARGE SCALE MRNA] OF 100-972</scope>
</reference>
<reference key="5">
    <citation type="journal article" date="2008" name="Biochem. J.">
        <title>Identification of the human N(alpha)-acetyltransferase complex B (hNatB): a complex important for cell-cycle progression.</title>
        <authorList>
            <person name="Starheim K.K."/>
            <person name="Arnesen T."/>
            <person name="Gromyko D."/>
            <person name="Ryningen A."/>
            <person name="Varhaug J.E."/>
            <person name="Lillehaug J.R."/>
        </authorList>
    </citation>
    <scope>FUNCTION</scope>
    <scope>INTERACTION WITH NAT5</scope>
    <scope>SUBCELLULAR LOCATION</scope>
</reference>
<reference key="6">
    <citation type="journal article" date="2009" name="BMC Proc.">
        <title>A synopsis of eukaryotic Nalpha-terminal acetyltransferases: nomenclature, subunits and substrates.</title>
        <authorList>
            <person name="Polevoda B."/>
            <person name="Arnesen T."/>
            <person name="Sherman F."/>
        </authorList>
    </citation>
    <scope>NOMENCLATURE</scope>
</reference>
<reference key="7">
    <citation type="journal article" date="2011" name="BMC Syst. Biol.">
        <title>Initial characterization of the human central proteome.</title>
        <authorList>
            <person name="Burkard T.R."/>
            <person name="Planyavsky M."/>
            <person name="Kaupe I."/>
            <person name="Breitwieser F.P."/>
            <person name="Buerckstuemmer T."/>
            <person name="Bennett K.L."/>
            <person name="Superti-Furga G."/>
            <person name="Colinge J."/>
        </authorList>
    </citation>
    <scope>IDENTIFICATION BY MASS SPECTROMETRY [LARGE SCALE ANALYSIS]</scope>
</reference>
<reference key="8">
    <citation type="journal article" date="2006" name="Science">
        <title>The consensus coding sequences of human breast and colorectal cancers.</title>
        <authorList>
            <person name="Sjoeblom T."/>
            <person name="Jones S."/>
            <person name="Wood L.D."/>
            <person name="Parsons D.W."/>
            <person name="Lin J."/>
            <person name="Barber T.D."/>
            <person name="Mandelker D."/>
            <person name="Leary R.J."/>
            <person name="Ptak J."/>
            <person name="Silliman N."/>
            <person name="Szabo S."/>
            <person name="Buckhaults P."/>
            <person name="Farrell C."/>
            <person name="Meeh P."/>
            <person name="Markowitz S.D."/>
            <person name="Willis J."/>
            <person name="Dawson D."/>
            <person name="Willson J.K.V."/>
            <person name="Gazdar A.F."/>
            <person name="Hartigan J."/>
            <person name="Wu L."/>
            <person name="Liu C."/>
            <person name="Parmigiani G."/>
            <person name="Park B.H."/>
            <person name="Bachman K.E."/>
            <person name="Papadopoulos N."/>
            <person name="Vogelstein B."/>
            <person name="Kinzler K.W."/>
            <person name="Velculescu V.E."/>
        </authorList>
    </citation>
    <scope>VARIANT [LARGE SCALE ANALYSIS] ARG-789</scope>
</reference>
<reference key="9">
    <citation type="journal article" date="2021" name="Genet. Med.">
        <title>Missense NAA20 variants impairing the NatB protein N-terminal acetyltransferase cause autosomal recessive developmental delay, intellectual disability, and microcephaly.</title>
        <authorList>
            <person name="Morrison J."/>
            <person name="Altuwaijri N.K."/>
            <person name="Broenstad K."/>
            <person name="Aksnes H."/>
            <person name="Alsaif H.S."/>
            <person name="Evans A."/>
            <person name="Hashem M."/>
            <person name="Wheeler P.G."/>
            <person name="Webb B.D."/>
            <person name="Alkuraya F.S."/>
            <person name="Arnesen T."/>
        </authorList>
    </citation>
    <scope>INTERACTION WITH NAA20</scope>
</reference>
<gene>
    <name type="primary">NAA25</name>
    <name type="synonym">C12orf30</name>
    <name type="synonym">MDM20</name>
    <name type="synonym">NAP1</name>
</gene>
<sequence length="972" mass="112292">MATRGHVQDPNDRRLRPIYDYLDNGNNKMAIQQADKLLKKHKDLHCAKVLKAIGLQRTGKQEEAFTLAQEVAALEPTDDNSLQALTILYREMHRPELVTKLYEAAVKKVPNSEEYHSHLFMAYARVGEYKKMQQAGMALYKIVPKNPYYFWSVMSLIMQSISAQDENLSKTMFLPLAERMVEKMVKEDKIEAEAEVELYYMILERLGKYQEALDVIRGKLGEKLTSEIQSRENKCMAMYKKLSRWPECNALSRRLLLKNSDDWQFYLTYFDSVFRLIEEAWSPPAEGEHSLEGEVHYSAEKAVKFIEDRITEESKSSRHLRGPHLAKLELIRRLRSQGCNDEYKLGDPEELMFQYFKKFGDKPCCFTDLKVFVDLLPATQCTKFINQLLGVVPLSTPTEDKLALPADIRALQQHLCVVQLTRLLGLYHTMDKNQKLSVVRELMLRYQHGLEFGKTCLKTELQFSDYYCLLAVHALIDVWRETGDETTVWQALTLLEEGLTHSPSNAQFKLLLVRIYCMLGAFEPVVDLYSSLDAKHIQHDTIGYLLTRYAESLGQYAAASQSCNFALRFFHSNQKDTSEYIIQAYKYGAFEKIPEFIAFRNRLNNSLHFAQVRTERMLLDLLLEANISTSLAESIKSMNLRPEEDDIPWEDLRDNRDLNVFFSWDPKDRDVSEEHKKLSLEEETLWLRIRSLTLRLISGLPSLNHPVEPKNSEKTAENGVSSRIDILRLLLQQLEATLETGKRFIEKDIQYPFLGPVPTRMGGFFNSGCSQCQISSFYLVNDIYELDTSGLEDTMEIQERIENSFKSLLDQLKDVFSKCKGDLLEVKDGNLKTHPTLLENLVFFVETISVILWVSSYCESVLRPYKLNLQKKKKKKKETSIIMPPVFTSFQDYVTGLQTLISNVVDHIKGLETHLIALKLEELILEDTSLSPEERKFSKTVQGKVQSSYLHSLLEMGELLKKRLETTKKLKI</sequence>
<comment type="function">
    <text evidence="2">Non-catalytic subunit of the NatB complex which catalyzes acetylation of the N-terminal methionine residues of peptides beginning with Met-Asp, Met-Glu, Met-Asn and Met-Gln. May play a role in normal cell-cycle progression.</text>
</comment>
<comment type="subunit">
    <text evidence="3">Component of the N-terminal acetyltransferase B (NatB) complex which is composed of NAA20 and NAA25.</text>
</comment>
<comment type="interaction">
    <interactant intactId="EBI-1048503">
        <id>Q14CX7</id>
    </interactant>
    <interactant intactId="EBI-1055023">
        <id>P61599</id>
        <label>NAA20</label>
    </interactant>
    <organismsDiffer>false</organismsDiffer>
    <experiments>2</experiments>
</comment>
<comment type="subcellular location">
    <subcellularLocation>
        <location evidence="2">Cytoplasm</location>
    </subcellularLocation>
</comment>
<comment type="alternative products">
    <event type="alternative splicing"/>
    <isoform>
        <id>Q14CX7-1</id>
        <name>1</name>
        <sequence type="displayed"/>
    </isoform>
    <isoform>
        <id>Q14CX7-2</id>
        <name>2</name>
        <sequence type="described" ref="VSP_026629 VSP_026630"/>
    </isoform>
</comment>
<comment type="similarity">
    <text evidence="5">Belongs to the MDM20/NAA25 family.</text>
</comment>
<comment type="sequence caution" evidence="5">
    <conflict type="erroneous initiation">
        <sequence resource="EMBL-CDS" id="BAB14432"/>
    </conflict>
</comment>
<comment type="sequence caution" evidence="5">
    <conflict type="erroneous initiation">
        <sequence resource="EMBL-CDS" id="CAE46062"/>
    </conflict>
</comment>
<protein>
    <recommendedName>
        <fullName>N-alpha-acetyltransferase 25, NatB auxiliary subunit</fullName>
    </recommendedName>
    <alternativeName>
        <fullName>Mitochondrial distribution and morphology protein 20</fullName>
    </alternativeName>
    <alternativeName>
        <fullName>N-terminal acetyltransferase B complex subunit MDM20</fullName>
        <shortName>NatB complex subunit MDM20</shortName>
    </alternativeName>
    <alternativeName>
        <fullName>N-terminal acetyltransferase B complex subunit NAA25</fullName>
    </alternativeName>
    <alternativeName>
        <fullName>p120</fullName>
    </alternativeName>
</protein>